<evidence type="ECO:0000255" key="1">
    <source>
        <dbReference type="HAMAP-Rule" id="MF_01310"/>
    </source>
</evidence>
<evidence type="ECO:0000305" key="2"/>
<name>RS11_SHEPC</name>
<accession>A4YBW0</accession>
<proteinExistence type="inferred from homology"/>
<reference key="1">
    <citation type="submission" date="2007-04" db="EMBL/GenBank/DDBJ databases">
        <title>Complete sequence of Shewanella putrefaciens CN-32.</title>
        <authorList>
            <consortium name="US DOE Joint Genome Institute"/>
            <person name="Copeland A."/>
            <person name="Lucas S."/>
            <person name="Lapidus A."/>
            <person name="Barry K."/>
            <person name="Detter J.C."/>
            <person name="Glavina del Rio T."/>
            <person name="Hammon N."/>
            <person name="Israni S."/>
            <person name="Dalin E."/>
            <person name="Tice H."/>
            <person name="Pitluck S."/>
            <person name="Chain P."/>
            <person name="Malfatti S."/>
            <person name="Shin M."/>
            <person name="Vergez L."/>
            <person name="Schmutz J."/>
            <person name="Larimer F."/>
            <person name="Land M."/>
            <person name="Hauser L."/>
            <person name="Kyrpides N."/>
            <person name="Mikhailova N."/>
            <person name="Romine M.F."/>
            <person name="Fredrickson J."/>
            <person name="Tiedje J."/>
            <person name="Richardson P."/>
        </authorList>
    </citation>
    <scope>NUCLEOTIDE SEQUENCE [LARGE SCALE GENOMIC DNA]</scope>
    <source>
        <strain>CN-32 / ATCC BAA-453</strain>
    </source>
</reference>
<sequence>MAKVPSRSPRKRVRKQVADGMAHIHASFNNTIVTITDRQGNALSWATSGGSGFRGSRKSTPFAAQVAAERAGAAAQDYGLKNLEVFVKGPGPGRESAIRALNAVGYKITNITDVTPIPHNGCRPPKKRRV</sequence>
<gene>
    <name evidence="1" type="primary">rpsK</name>
    <name type="ordered locus">Sputcn32_3736</name>
</gene>
<protein>
    <recommendedName>
        <fullName evidence="1">Small ribosomal subunit protein uS11</fullName>
    </recommendedName>
    <alternativeName>
        <fullName evidence="2">30S ribosomal protein S11</fullName>
    </alternativeName>
</protein>
<comment type="function">
    <text evidence="1">Located on the platform of the 30S subunit, it bridges several disparate RNA helices of the 16S rRNA. Forms part of the Shine-Dalgarno cleft in the 70S ribosome.</text>
</comment>
<comment type="subunit">
    <text evidence="1">Part of the 30S ribosomal subunit. Interacts with proteins S7 and S18. Binds to IF-3.</text>
</comment>
<comment type="similarity">
    <text evidence="1">Belongs to the universal ribosomal protein uS11 family.</text>
</comment>
<dbReference type="EMBL" id="CP000681">
    <property type="protein sequence ID" value="ABP77443.1"/>
    <property type="molecule type" value="Genomic_DNA"/>
</dbReference>
<dbReference type="SMR" id="A4YBW0"/>
<dbReference type="STRING" id="319224.Sputcn32_3736"/>
<dbReference type="KEGG" id="spc:Sputcn32_3736"/>
<dbReference type="eggNOG" id="COG0100">
    <property type="taxonomic scope" value="Bacteria"/>
</dbReference>
<dbReference type="HOGENOM" id="CLU_072439_5_0_6"/>
<dbReference type="GO" id="GO:1990904">
    <property type="term" value="C:ribonucleoprotein complex"/>
    <property type="evidence" value="ECO:0007669"/>
    <property type="project" value="UniProtKB-KW"/>
</dbReference>
<dbReference type="GO" id="GO:0005840">
    <property type="term" value="C:ribosome"/>
    <property type="evidence" value="ECO:0007669"/>
    <property type="project" value="UniProtKB-KW"/>
</dbReference>
<dbReference type="GO" id="GO:0019843">
    <property type="term" value="F:rRNA binding"/>
    <property type="evidence" value="ECO:0007669"/>
    <property type="project" value="UniProtKB-UniRule"/>
</dbReference>
<dbReference type="GO" id="GO:0003735">
    <property type="term" value="F:structural constituent of ribosome"/>
    <property type="evidence" value="ECO:0007669"/>
    <property type="project" value="InterPro"/>
</dbReference>
<dbReference type="GO" id="GO:0006412">
    <property type="term" value="P:translation"/>
    <property type="evidence" value="ECO:0007669"/>
    <property type="project" value="UniProtKB-UniRule"/>
</dbReference>
<dbReference type="FunFam" id="3.30.420.80:FF:000001">
    <property type="entry name" value="30S ribosomal protein S11"/>
    <property type="match status" value="1"/>
</dbReference>
<dbReference type="Gene3D" id="3.30.420.80">
    <property type="entry name" value="Ribosomal protein S11"/>
    <property type="match status" value="1"/>
</dbReference>
<dbReference type="HAMAP" id="MF_01310">
    <property type="entry name" value="Ribosomal_uS11"/>
    <property type="match status" value="1"/>
</dbReference>
<dbReference type="InterPro" id="IPR001971">
    <property type="entry name" value="Ribosomal_uS11"/>
</dbReference>
<dbReference type="InterPro" id="IPR019981">
    <property type="entry name" value="Ribosomal_uS11_bac-type"/>
</dbReference>
<dbReference type="InterPro" id="IPR018102">
    <property type="entry name" value="Ribosomal_uS11_CS"/>
</dbReference>
<dbReference type="InterPro" id="IPR036967">
    <property type="entry name" value="Ribosomal_uS11_sf"/>
</dbReference>
<dbReference type="NCBIfam" id="NF003698">
    <property type="entry name" value="PRK05309.1"/>
    <property type="match status" value="1"/>
</dbReference>
<dbReference type="NCBIfam" id="TIGR03632">
    <property type="entry name" value="uS11_bact"/>
    <property type="match status" value="1"/>
</dbReference>
<dbReference type="PANTHER" id="PTHR11759">
    <property type="entry name" value="40S RIBOSOMAL PROTEIN S14/30S RIBOSOMAL PROTEIN S11"/>
    <property type="match status" value="1"/>
</dbReference>
<dbReference type="Pfam" id="PF00411">
    <property type="entry name" value="Ribosomal_S11"/>
    <property type="match status" value="1"/>
</dbReference>
<dbReference type="PIRSF" id="PIRSF002131">
    <property type="entry name" value="Ribosomal_S11"/>
    <property type="match status" value="1"/>
</dbReference>
<dbReference type="SUPFAM" id="SSF53137">
    <property type="entry name" value="Translational machinery components"/>
    <property type="match status" value="1"/>
</dbReference>
<dbReference type="PROSITE" id="PS00054">
    <property type="entry name" value="RIBOSOMAL_S11"/>
    <property type="match status" value="1"/>
</dbReference>
<feature type="chain" id="PRO_1000051855" description="Small ribosomal subunit protein uS11">
    <location>
        <begin position="1"/>
        <end position="130"/>
    </location>
</feature>
<organism>
    <name type="scientific">Shewanella putrefaciens (strain CN-32 / ATCC BAA-453)</name>
    <dbReference type="NCBI Taxonomy" id="319224"/>
    <lineage>
        <taxon>Bacteria</taxon>
        <taxon>Pseudomonadati</taxon>
        <taxon>Pseudomonadota</taxon>
        <taxon>Gammaproteobacteria</taxon>
        <taxon>Alteromonadales</taxon>
        <taxon>Shewanellaceae</taxon>
        <taxon>Shewanella</taxon>
    </lineage>
</organism>
<keyword id="KW-0687">Ribonucleoprotein</keyword>
<keyword id="KW-0689">Ribosomal protein</keyword>
<keyword id="KW-0694">RNA-binding</keyword>
<keyword id="KW-0699">rRNA-binding</keyword>